<gene>
    <name evidence="1" type="primary">murI</name>
    <name type="ordered locus">EcE24377A_4508</name>
</gene>
<organism>
    <name type="scientific">Escherichia coli O139:H28 (strain E24377A / ETEC)</name>
    <dbReference type="NCBI Taxonomy" id="331111"/>
    <lineage>
        <taxon>Bacteria</taxon>
        <taxon>Pseudomonadati</taxon>
        <taxon>Pseudomonadota</taxon>
        <taxon>Gammaproteobacteria</taxon>
        <taxon>Enterobacterales</taxon>
        <taxon>Enterobacteriaceae</taxon>
        <taxon>Escherichia</taxon>
    </lineage>
</organism>
<evidence type="ECO:0000255" key="1">
    <source>
        <dbReference type="HAMAP-Rule" id="MF_00258"/>
    </source>
</evidence>
<protein>
    <recommendedName>
        <fullName evidence="1">Glutamate racemase</fullName>
        <ecNumber evidence="1">5.1.1.3</ecNumber>
    </recommendedName>
</protein>
<dbReference type="EC" id="5.1.1.3" evidence="1"/>
<dbReference type="EMBL" id="CP000800">
    <property type="protein sequence ID" value="ABV18830.1"/>
    <property type="molecule type" value="Genomic_DNA"/>
</dbReference>
<dbReference type="RefSeq" id="WP_000201827.1">
    <property type="nucleotide sequence ID" value="NC_009801.1"/>
</dbReference>
<dbReference type="SMR" id="A7ZUI7"/>
<dbReference type="GeneID" id="75203201"/>
<dbReference type="KEGG" id="ecw:EcE24377A_4508"/>
<dbReference type="HOGENOM" id="CLU_052344_2_0_6"/>
<dbReference type="UniPathway" id="UPA00219"/>
<dbReference type="Proteomes" id="UP000001122">
    <property type="component" value="Chromosome"/>
</dbReference>
<dbReference type="GO" id="GO:0008881">
    <property type="term" value="F:glutamate racemase activity"/>
    <property type="evidence" value="ECO:0007669"/>
    <property type="project" value="UniProtKB-UniRule"/>
</dbReference>
<dbReference type="GO" id="GO:0071555">
    <property type="term" value="P:cell wall organization"/>
    <property type="evidence" value="ECO:0007669"/>
    <property type="project" value="UniProtKB-KW"/>
</dbReference>
<dbReference type="GO" id="GO:0009252">
    <property type="term" value="P:peptidoglycan biosynthetic process"/>
    <property type="evidence" value="ECO:0007669"/>
    <property type="project" value="UniProtKB-UniRule"/>
</dbReference>
<dbReference type="GO" id="GO:0008360">
    <property type="term" value="P:regulation of cell shape"/>
    <property type="evidence" value="ECO:0007669"/>
    <property type="project" value="UniProtKB-KW"/>
</dbReference>
<dbReference type="FunFam" id="3.40.50.1860:FF:000002">
    <property type="entry name" value="Glutamate racemase"/>
    <property type="match status" value="1"/>
</dbReference>
<dbReference type="Gene3D" id="3.40.50.1860">
    <property type="match status" value="2"/>
</dbReference>
<dbReference type="HAMAP" id="MF_00258">
    <property type="entry name" value="Glu_racemase"/>
    <property type="match status" value="1"/>
</dbReference>
<dbReference type="InterPro" id="IPR015942">
    <property type="entry name" value="Asp/Glu/hydantoin_racemase"/>
</dbReference>
<dbReference type="InterPro" id="IPR001920">
    <property type="entry name" value="Asp/Glu_race"/>
</dbReference>
<dbReference type="InterPro" id="IPR018187">
    <property type="entry name" value="Asp/Glu_racemase_AS_1"/>
</dbReference>
<dbReference type="InterPro" id="IPR033134">
    <property type="entry name" value="Asp/Glu_racemase_AS_2"/>
</dbReference>
<dbReference type="InterPro" id="IPR004391">
    <property type="entry name" value="Glu_race"/>
</dbReference>
<dbReference type="NCBIfam" id="TIGR00067">
    <property type="entry name" value="glut_race"/>
    <property type="match status" value="1"/>
</dbReference>
<dbReference type="NCBIfam" id="NF002034">
    <property type="entry name" value="PRK00865.1-1"/>
    <property type="match status" value="1"/>
</dbReference>
<dbReference type="PANTHER" id="PTHR21198">
    <property type="entry name" value="GLUTAMATE RACEMASE"/>
    <property type="match status" value="1"/>
</dbReference>
<dbReference type="PANTHER" id="PTHR21198:SF2">
    <property type="entry name" value="GLUTAMATE RACEMASE"/>
    <property type="match status" value="1"/>
</dbReference>
<dbReference type="Pfam" id="PF01177">
    <property type="entry name" value="Asp_Glu_race"/>
    <property type="match status" value="1"/>
</dbReference>
<dbReference type="SUPFAM" id="SSF53681">
    <property type="entry name" value="Aspartate/glutamate racemase"/>
    <property type="match status" value="2"/>
</dbReference>
<dbReference type="PROSITE" id="PS00923">
    <property type="entry name" value="ASP_GLU_RACEMASE_1"/>
    <property type="match status" value="1"/>
</dbReference>
<dbReference type="PROSITE" id="PS00924">
    <property type="entry name" value="ASP_GLU_RACEMASE_2"/>
    <property type="match status" value="1"/>
</dbReference>
<name>MURI_ECO24</name>
<comment type="function">
    <text evidence="1">Provides the (R)-glutamate required for cell wall biosynthesis.</text>
</comment>
<comment type="catalytic activity">
    <reaction evidence="1">
        <text>L-glutamate = D-glutamate</text>
        <dbReference type="Rhea" id="RHEA:12813"/>
        <dbReference type="ChEBI" id="CHEBI:29985"/>
        <dbReference type="ChEBI" id="CHEBI:29986"/>
        <dbReference type="EC" id="5.1.1.3"/>
    </reaction>
</comment>
<comment type="pathway">
    <text evidence="1">Cell wall biogenesis; peptidoglycan biosynthesis.</text>
</comment>
<comment type="similarity">
    <text evidence="1">Belongs to the aspartate/glutamate racemases family.</text>
</comment>
<sequence length="285" mass="31132">MATKLQDGNTPCLAATPSEPRPTVLVFDSGVGGLSVYDEIRHLLPDLHYIYAFDNVAFPYGEKSEEFIVERVVAIVTAVQERYPLALAVVACNTASTVSLPALREKFDFPVVGVVPAIKPAARLTANGIVGLLATRGTVKRSYTHELIARFANECQIEMLGSAEMVELAEAKLHGEDVSLDALKRILRPWLRMKEPPDTVVLGCTHFPLLQEELLQVLPEGTRLVDSGAAIARRTAWLLEHEAPDAKSADANIAFCMAMTPEAEQLLPVLQRYGFETLEKLAVLG</sequence>
<feature type="chain" id="PRO_1000059066" description="Glutamate racemase">
    <location>
        <begin position="1"/>
        <end position="285"/>
    </location>
</feature>
<feature type="active site" description="Proton donor/acceptor" evidence="1">
    <location>
        <position position="92"/>
    </location>
</feature>
<feature type="active site" description="Proton donor/acceptor" evidence="1">
    <location>
        <position position="204"/>
    </location>
</feature>
<feature type="binding site" evidence="1">
    <location>
        <begin position="28"/>
        <end position="29"/>
    </location>
    <ligand>
        <name>substrate</name>
    </ligand>
</feature>
<feature type="binding site" evidence="1">
    <location>
        <begin position="60"/>
        <end position="61"/>
    </location>
    <ligand>
        <name>substrate</name>
    </ligand>
</feature>
<feature type="binding site" evidence="1">
    <location>
        <begin position="93"/>
        <end position="94"/>
    </location>
    <ligand>
        <name>substrate</name>
    </ligand>
</feature>
<feature type="binding site" evidence="1">
    <location>
        <begin position="205"/>
        <end position="206"/>
    </location>
    <ligand>
        <name>substrate</name>
    </ligand>
</feature>
<accession>A7ZUI7</accession>
<keyword id="KW-0133">Cell shape</keyword>
<keyword id="KW-0961">Cell wall biogenesis/degradation</keyword>
<keyword id="KW-0413">Isomerase</keyword>
<keyword id="KW-0573">Peptidoglycan synthesis</keyword>
<keyword id="KW-1185">Reference proteome</keyword>
<proteinExistence type="inferred from homology"/>
<reference key="1">
    <citation type="journal article" date="2008" name="J. Bacteriol.">
        <title>The pangenome structure of Escherichia coli: comparative genomic analysis of E. coli commensal and pathogenic isolates.</title>
        <authorList>
            <person name="Rasko D.A."/>
            <person name="Rosovitz M.J."/>
            <person name="Myers G.S.A."/>
            <person name="Mongodin E.F."/>
            <person name="Fricke W.F."/>
            <person name="Gajer P."/>
            <person name="Crabtree J."/>
            <person name="Sebaihia M."/>
            <person name="Thomson N.R."/>
            <person name="Chaudhuri R."/>
            <person name="Henderson I.R."/>
            <person name="Sperandio V."/>
            <person name="Ravel J."/>
        </authorList>
    </citation>
    <scope>NUCLEOTIDE SEQUENCE [LARGE SCALE GENOMIC DNA]</scope>
    <source>
        <strain>E24377A / ETEC</strain>
    </source>
</reference>